<gene>
    <name type="ordered locus">MJ0363</name>
</gene>
<sequence length="759" mass="86167">MVYDNIKREIIGMLKRMPNKQADWDNDLLPTLKAMFNPKSVSNAKSQLISEGVISQEIVDGKKIITLIKDPYELQAPNVFDEEMFLAYYTDKLKEYFKHKLSTEGPEWDIFDVKEFIMHFPESGDLNDKLIEHPYEVRKSITNVYIEAYEELFNETPNVEFIHIRNPIDCRISLSELSSAHKGKLVEFRAMILQATKLKLRYAKGFYYCPKCGATKTLDLGFWDKPKEVGKSLTCPADGCDCKGLIFDEDLSGKVDFQEIKVQTPLQESIYANKHSTTVFYEFNKPKKAVYSGYVKIVGVPIVKENKNGSVGELYIHAFYIEKDDEDIEEIAKNLNEKDLELINRIAKDKNVIQKLSDYAFREVTGYDMIKRAVLLQLVSSGTNIDMRTSIHILMISDPGVGKSTLMESLIQKFPFVKKVYAVTSSGPGLVGSVVREKAEFGDSWVLKAGVLTEADGGVVCIDEFSRNKEVYDYLLGVMEQQKIEINKAGVIDAVLPARVAILAACNPRFGRFNPDLTVWEQINLPKELLDRFDLIFVIKDKIDKKKDEDIADFSIDNYNSKVRERKGKSSGKKFVINGVELNDELLLKYVLYARQIEPEISDEARKIIKEYYVSVRKMSEAKGTFGISARQLGSIIRLAVAHAKLRLSEVVKAVDAEEAIRLVDTCLKQIAYDPESGSIDIDKIAGTPKSKRDKVEKVLNIIKEISNSRDDGLAPEEEIYERAERAGLSEKEVEDAINYLKRVGDIYSPKSGYWQLMS</sequence>
<comment type="similarity">
    <text evidence="2">Belongs to the MCM family.</text>
</comment>
<protein>
    <recommendedName>
        <fullName>Uncharacterized MCM-type protein MJ0363</fullName>
    </recommendedName>
</protein>
<accession>Q57809</accession>
<keyword id="KW-0067">ATP-binding</keyword>
<keyword id="KW-0131">Cell cycle</keyword>
<keyword id="KW-0235">DNA replication</keyword>
<keyword id="KW-0238">DNA-binding</keyword>
<keyword id="KW-0547">Nucleotide-binding</keyword>
<keyword id="KW-1185">Reference proteome</keyword>
<keyword id="KW-0804">Transcription</keyword>
<keyword id="KW-0805">Transcription regulation</keyword>
<organism>
    <name type="scientific">Methanocaldococcus jannaschii (strain ATCC 43067 / DSM 2661 / JAL-1 / JCM 10045 / NBRC 100440)</name>
    <name type="common">Methanococcus jannaschii</name>
    <dbReference type="NCBI Taxonomy" id="243232"/>
    <lineage>
        <taxon>Archaea</taxon>
        <taxon>Methanobacteriati</taxon>
        <taxon>Methanobacteriota</taxon>
        <taxon>Methanomada group</taxon>
        <taxon>Methanococci</taxon>
        <taxon>Methanococcales</taxon>
        <taxon>Methanocaldococcaceae</taxon>
        <taxon>Methanocaldococcus</taxon>
    </lineage>
</organism>
<reference key="1">
    <citation type="journal article" date="1996" name="Science">
        <title>Complete genome sequence of the methanogenic archaeon, Methanococcus jannaschii.</title>
        <authorList>
            <person name="Bult C.J."/>
            <person name="White O."/>
            <person name="Olsen G.J."/>
            <person name="Zhou L."/>
            <person name="Fleischmann R.D."/>
            <person name="Sutton G.G."/>
            <person name="Blake J.A."/>
            <person name="FitzGerald L.M."/>
            <person name="Clayton R.A."/>
            <person name="Gocayne J.D."/>
            <person name="Kerlavage A.R."/>
            <person name="Dougherty B.A."/>
            <person name="Tomb J.-F."/>
            <person name="Adams M.D."/>
            <person name="Reich C.I."/>
            <person name="Overbeek R."/>
            <person name="Kirkness E.F."/>
            <person name="Weinstock K.G."/>
            <person name="Merrick J.M."/>
            <person name="Glodek A."/>
            <person name="Scott J.L."/>
            <person name="Geoghagen N.S.M."/>
            <person name="Weidman J.F."/>
            <person name="Fuhrmann J.L."/>
            <person name="Nguyen D."/>
            <person name="Utterback T.R."/>
            <person name="Kelley J.M."/>
            <person name="Peterson J.D."/>
            <person name="Sadow P.W."/>
            <person name="Hanna M.C."/>
            <person name="Cotton M.D."/>
            <person name="Roberts K.M."/>
            <person name="Hurst M.A."/>
            <person name="Kaine B.P."/>
            <person name="Borodovsky M."/>
            <person name="Klenk H.-P."/>
            <person name="Fraser C.M."/>
            <person name="Smith H.O."/>
            <person name="Woese C.R."/>
            <person name="Venter J.C."/>
        </authorList>
    </citation>
    <scope>NUCLEOTIDE SEQUENCE [LARGE SCALE GENOMIC DNA]</scope>
    <source>
        <strain>ATCC 43067 / DSM 2661 / JAL-1 / JCM 10045 / NBRC 100440</strain>
    </source>
</reference>
<evidence type="ECO:0000255" key="1"/>
<evidence type="ECO:0000305" key="2"/>
<name>Y363_METJA</name>
<dbReference type="EMBL" id="L77117">
    <property type="protein sequence ID" value="AAB98345.1"/>
    <property type="molecule type" value="Genomic_DNA"/>
</dbReference>
<dbReference type="PIR" id="C64345">
    <property type="entry name" value="C64345"/>
</dbReference>
<dbReference type="RefSeq" id="WP_010869862.1">
    <property type="nucleotide sequence ID" value="NC_000909.1"/>
</dbReference>
<dbReference type="SMR" id="Q57809"/>
<dbReference type="FunCoup" id="Q57809">
    <property type="interactions" value="100"/>
</dbReference>
<dbReference type="STRING" id="243232.MJ_0363"/>
<dbReference type="PaxDb" id="243232-MJ_0363"/>
<dbReference type="EnsemblBacteria" id="AAB98345">
    <property type="protein sequence ID" value="AAB98345"/>
    <property type="gene ID" value="MJ_0363"/>
</dbReference>
<dbReference type="GeneID" id="1451220"/>
<dbReference type="KEGG" id="mja:MJ_0363"/>
<dbReference type="eggNOG" id="arCOG00439">
    <property type="taxonomic scope" value="Archaea"/>
</dbReference>
<dbReference type="HOGENOM" id="CLU_000995_7_2_2"/>
<dbReference type="InParanoid" id="Q57809"/>
<dbReference type="OrthoDB" id="6747at2157"/>
<dbReference type="PhylomeDB" id="Q57809"/>
<dbReference type="Proteomes" id="UP000000805">
    <property type="component" value="Chromosome"/>
</dbReference>
<dbReference type="GO" id="GO:0042555">
    <property type="term" value="C:MCM complex"/>
    <property type="evidence" value="ECO:0000318"/>
    <property type="project" value="GO_Central"/>
</dbReference>
<dbReference type="GO" id="GO:0005524">
    <property type="term" value="F:ATP binding"/>
    <property type="evidence" value="ECO:0007669"/>
    <property type="project" value="UniProtKB-KW"/>
</dbReference>
<dbReference type="GO" id="GO:0016887">
    <property type="term" value="F:ATP hydrolysis activity"/>
    <property type="evidence" value="ECO:0007669"/>
    <property type="project" value="InterPro"/>
</dbReference>
<dbReference type="GO" id="GO:0003697">
    <property type="term" value="F:single-stranded DNA binding"/>
    <property type="evidence" value="ECO:0000318"/>
    <property type="project" value="GO_Central"/>
</dbReference>
<dbReference type="GO" id="GO:0006260">
    <property type="term" value="P:DNA replication"/>
    <property type="evidence" value="ECO:0007669"/>
    <property type="project" value="UniProtKB-KW"/>
</dbReference>
<dbReference type="CDD" id="cd17706">
    <property type="entry name" value="MCM"/>
    <property type="match status" value="1"/>
</dbReference>
<dbReference type="FunFam" id="1.10.10.10:FF:000630">
    <property type="entry name" value="DNA replication licensing factor (Mcm)"/>
    <property type="match status" value="1"/>
</dbReference>
<dbReference type="FunFam" id="2.20.28.10:FF:000055">
    <property type="entry name" value="Uncharacterized MCM-type protein MJ1489"/>
    <property type="match status" value="1"/>
</dbReference>
<dbReference type="Gene3D" id="3.40.50.300">
    <property type="entry name" value="P-loop containing nucleotide triphosphate hydrolases"/>
    <property type="match status" value="1"/>
</dbReference>
<dbReference type="Gene3D" id="1.10.10.10">
    <property type="entry name" value="Winged helix-like DNA-binding domain superfamily/Winged helix DNA-binding domain"/>
    <property type="match status" value="1"/>
</dbReference>
<dbReference type="InterPro" id="IPR003593">
    <property type="entry name" value="AAA+_ATPase"/>
</dbReference>
<dbReference type="InterPro" id="IPR031327">
    <property type="entry name" value="MCM"/>
</dbReference>
<dbReference type="InterPro" id="IPR018525">
    <property type="entry name" value="MCM_CS"/>
</dbReference>
<dbReference type="InterPro" id="IPR001208">
    <property type="entry name" value="MCM_dom"/>
</dbReference>
<dbReference type="InterPro" id="IPR041562">
    <property type="entry name" value="MCM_lid"/>
</dbReference>
<dbReference type="InterPro" id="IPR033762">
    <property type="entry name" value="MCM_OB"/>
</dbReference>
<dbReference type="InterPro" id="IPR048907">
    <property type="entry name" value="MCM_WH"/>
</dbReference>
<dbReference type="InterPro" id="IPR012340">
    <property type="entry name" value="NA-bd_OB-fold"/>
</dbReference>
<dbReference type="InterPro" id="IPR027417">
    <property type="entry name" value="P-loop_NTPase"/>
</dbReference>
<dbReference type="InterPro" id="IPR036388">
    <property type="entry name" value="WH-like_DNA-bd_sf"/>
</dbReference>
<dbReference type="PANTHER" id="PTHR11630">
    <property type="entry name" value="DNA REPLICATION LICENSING FACTOR MCM FAMILY MEMBER"/>
    <property type="match status" value="1"/>
</dbReference>
<dbReference type="PANTHER" id="PTHR11630:SF66">
    <property type="entry name" value="DNA REPLICATION LICENSING FACTOR MCM4"/>
    <property type="match status" value="1"/>
</dbReference>
<dbReference type="Pfam" id="PF00493">
    <property type="entry name" value="MCM"/>
    <property type="match status" value="1"/>
</dbReference>
<dbReference type="Pfam" id="PF17855">
    <property type="entry name" value="MCM_lid"/>
    <property type="match status" value="1"/>
</dbReference>
<dbReference type="Pfam" id="PF17207">
    <property type="entry name" value="MCM_OB"/>
    <property type="match status" value="1"/>
</dbReference>
<dbReference type="Pfam" id="PF21120">
    <property type="entry name" value="MCM_WH_arc"/>
    <property type="match status" value="1"/>
</dbReference>
<dbReference type="PRINTS" id="PR01657">
    <property type="entry name" value="MCMFAMILY"/>
</dbReference>
<dbReference type="SMART" id="SM00382">
    <property type="entry name" value="AAA"/>
    <property type="match status" value="1"/>
</dbReference>
<dbReference type="SMART" id="SM00350">
    <property type="entry name" value="MCM"/>
    <property type="match status" value="1"/>
</dbReference>
<dbReference type="SUPFAM" id="SSF50249">
    <property type="entry name" value="Nucleic acid-binding proteins"/>
    <property type="match status" value="1"/>
</dbReference>
<dbReference type="SUPFAM" id="SSF52540">
    <property type="entry name" value="P-loop containing nucleoside triphosphate hydrolases"/>
    <property type="match status" value="1"/>
</dbReference>
<dbReference type="PROSITE" id="PS00847">
    <property type="entry name" value="MCM_1"/>
    <property type="match status" value="1"/>
</dbReference>
<dbReference type="PROSITE" id="PS50051">
    <property type="entry name" value="MCM_2"/>
    <property type="match status" value="1"/>
</dbReference>
<proteinExistence type="inferred from homology"/>
<feature type="chain" id="PRO_0000194129" description="Uncharacterized MCM-type protein MJ0363">
    <location>
        <begin position="1"/>
        <end position="759"/>
    </location>
</feature>
<feature type="domain" description="MCM">
    <location>
        <begin position="352"/>
        <end position="556"/>
    </location>
</feature>
<feature type="binding site" evidence="1">
    <location>
        <begin position="397"/>
        <end position="404"/>
    </location>
    <ligand>
        <name>ATP</name>
        <dbReference type="ChEBI" id="CHEBI:30616"/>
    </ligand>
</feature>